<evidence type="ECO:0000255" key="1">
    <source>
        <dbReference type="HAMAP-Rule" id="MF_01657"/>
    </source>
</evidence>
<proteinExistence type="inferred from homology"/>
<reference key="1">
    <citation type="submission" date="2006-12" db="EMBL/GenBank/DDBJ databases">
        <title>Complete sequence of chromosome 1 of Nocardioides sp. JS614.</title>
        <authorList>
            <person name="Copeland A."/>
            <person name="Lucas S."/>
            <person name="Lapidus A."/>
            <person name="Barry K."/>
            <person name="Detter J.C."/>
            <person name="Glavina del Rio T."/>
            <person name="Hammon N."/>
            <person name="Israni S."/>
            <person name="Dalin E."/>
            <person name="Tice H."/>
            <person name="Pitluck S."/>
            <person name="Thompson L.S."/>
            <person name="Brettin T."/>
            <person name="Bruce D."/>
            <person name="Han C."/>
            <person name="Tapia R."/>
            <person name="Schmutz J."/>
            <person name="Larimer F."/>
            <person name="Land M."/>
            <person name="Hauser L."/>
            <person name="Kyrpides N."/>
            <person name="Kim E."/>
            <person name="Mattes T."/>
            <person name="Gossett J."/>
            <person name="Richardson P."/>
        </authorList>
    </citation>
    <scope>NUCLEOTIDE SEQUENCE [LARGE SCALE GENOMIC DNA]</scope>
    <source>
        <strain>ATCC BAA-499 / JS614</strain>
    </source>
</reference>
<name>ACDH2_NOCSJ</name>
<feature type="chain" id="PRO_0000387699" description="Acetaldehyde dehydrogenase 2">
    <location>
        <begin position="1"/>
        <end position="314"/>
    </location>
</feature>
<feature type="active site" description="Acyl-thioester intermediate" evidence="1">
    <location>
        <position position="133"/>
    </location>
</feature>
<feature type="binding site" evidence="1">
    <location>
        <begin position="15"/>
        <end position="18"/>
    </location>
    <ligand>
        <name>NAD(+)</name>
        <dbReference type="ChEBI" id="CHEBI:57540"/>
    </ligand>
</feature>
<feature type="binding site" evidence="1">
    <location>
        <begin position="164"/>
        <end position="172"/>
    </location>
    <ligand>
        <name>NAD(+)</name>
        <dbReference type="ChEBI" id="CHEBI:57540"/>
    </ligand>
</feature>
<feature type="binding site" evidence="1">
    <location>
        <position position="289"/>
    </location>
    <ligand>
        <name>NAD(+)</name>
        <dbReference type="ChEBI" id="CHEBI:57540"/>
    </ligand>
</feature>
<dbReference type="EC" id="1.2.1.10" evidence="1"/>
<dbReference type="EMBL" id="CP000509">
    <property type="protein sequence ID" value="ABL81659.1"/>
    <property type="molecule type" value="Genomic_DNA"/>
</dbReference>
<dbReference type="SMR" id="A1SIM4"/>
<dbReference type="STRING" id="196162.Noca_2150"/>
<dbReference type="KEGG" id="nca:Noca_2150"/>
<dbReference type="eggNOG" id="COG4569">
    <property type="taxonomic scope" value="Bacteria"/>
</dbReference>
<dbReference type="HOGENOM" id="CLU_062208_0_0_11"/>
<dbReference type="Proteomes" id="UP000000640">
    <property type="component" value="Chromosome"/>
</dbReference>
<dbReference type="GO" id="GO:0008774">
    <property type="term" value="F:acetaldehyde dehydrogenase (acetylating) activity"/>
    <property type="evidence" value="ECO:0007669"/>
    <property type="project" value="UniProtKB-UniRule"/>
</dbReference>
<dbReference type="GO" id="GO:0051287">
    <property type="term" value="F:NAD binding"/>
    <property type="evidence" value="ECO:0007669"/>
    <property type="project" value="UniProtKB-UniRule"/>
</dbReference>
<dbReference type="GO" id="GO:0009056">
    <property type="term" value="P:catabolic process"/>
    <property type="evidence" value="ECO:0007669"/>
    <property type="project" value="UniProtKB-KW"/>
</dbReference>
<dbReference type="CDD" id="cd23933">
    <property type="entry name" value="ALDH_C"/>
    <property type="match status" value="1"/>
</dbReference>
<dbReference type="Gene3D" id="3.30.360.10">
    <property type="entry name" value="Dihydrodipicolinate Reductase, domain 2"/>
    <property type="match status" value="1"/>
</dbReference>
<dbReference type="Gene3D" id="3.40.50.720">
    <property type="entry name" value="NAD(P)-binding Rossmann-like Domain"/>
    <property type="match status" value="1"/>
</dbReference>
<dbReference type="HAMAP" id="MF_01657">
    <property type="entry name" value="Ac_ald_DH_ac"/>
    <property type="match status" value="1"/>
</dbReference>
<dbReference type="InterPro" id="IPR003361">
    <property type="entry name" value="Acetaldehyde_dehydrogenase"/>
</dbReference>
<dbReference type="InterPro" id="IPR015426">
    <property type="entry name" value="Acetylaldehyde_DH_C"/>
</dbReference>
<dbReference type="InterPro" id="IPR036291">
    <property type="entry name" value="NAD(P)-bd_dom_sf"/>
</dbReference>
<dbReference type="InterPro" id="IPR000534">
    <property type="entry name" value="Semialdehyde_DH_NAD-bd"/>
</dbReference>
<dbReference type="NCBIfam" id="TIGR03215">
    <property type="entry name" value="ac_ald_DH_ac"/>
    <property type="match status" value="1"/>
</dbReference>
<dbReference type="NCBIfam" id="NF006157">
    <property type="entry name" value="PRK08300.1"/>
    <property type="match status" value="1"/>
</dbReference>
<dbReference type="Pfam" id="PF09290">
    <property type="entry name" value="AcetDehyd-dimer"/>
    <property type="match status" value="1"/>
</dbReference>
<dbReference type="PIRSF" id="PIRSF015689">
    <property type="entry name" value="Actaldh_dh_actl"/>
    <property type="match status" value="1"/>
</dbReference>
<dbReference type="SMART" id="SM00859">
    <property type="entry name" value="Semialdhyde_dh"/>
    <property type="match status" value="1"/>
</dbReference>
<dbReference type="SUPFAM" id="SSF55347">
    <property type="entry name" value="Glyceraldehyde-3-phosphate dehydrogenase-like, C-terminal domain"/>
    <property type="match status" value="1"/>
</dbReference>
<dbReference type="SUPFAM" id="SSF51735">
    <property type="entry name" value="NAD(P)-binding Rossmann-fold domains"/>
    <property type="match status" value="1"/>
</dbReference>
<protein>
    <recommendedName>
        <fullName evidence="1">Acetaldehyde dehydrogenase 2</fullName>
        <ecNumber evidence="1">1.2.1.10</ecNumber>
    </recommendedName>
    <alternativeName>
        <fullName evidence="1">Acetaldehyde dehydrogenase [acetylating] 2</fullName>
    </alternativeName>
</protein>
<gene>
    <name type="ordered locus">Noca_2150</name>
</gene>
<sequence length="314" mass="32725">MTASTIPRQIAIIGSGNIGTDLMIKVLRLSKTLEVGAMVGIDPDSDGLARANRLGVPTTSDGVDGLIRMPNFEAIDIVLDATSARAHAANYTALRRYRKRMIDLTPAAVGPFVVPAVNMGASLSADNVNMVTCGGQATIPIVAAISQVTPVAYAEIVASIASKSAGPGTRQNIDEFTETTAHAIEQVGGARKGKAIIILNPAEPPLIMRDTVLALIGPSDHDAVKGSIRAMVDAVAEYVPGYRLKQRIEIQPLDGLPVGTLTSEPVTHKVSVFLEVEGAAHYLPAYAGNLDIMTSAALRVAEAMAAQKLSGAVA</sequence>
<keyword id="KW-0058">Aromatic hydrocarbons catabolism</keyword>
<keyword id="KW-0520">NAD</keyword>
<keyword id="KW-0560">Oxidoreductase</keyword>
<keyword id="KW-1185">Reference proteome</keyword>
<accession>A1SIM4</accession>
<comment type="catalytic activity">
    <reaction evidence="1">
        <text>acetaldehyde + NAD(+) + CoA = acetyl-CoA + NADH + H(+)</text>
        <dbReference type="Rhea" id="RHEA:23288"/>
        <dbReference type="ChEBI" id="CHEBI:15343"/>
        <dbReference type="ChEBI" id="CHEBI:15378"/>
        <dbReference type="ChEBI" id="CHEBI:57287"/>
        <dbReference type="ChEBI" id="CHEBI:57288"/>
        <dbReference type="ChEBI" id="CHEBI:57540"/>
        <dbReference type="ChEBI" id="CHEBI:57945"/>
        <dbReference type="EC" id="1.2.1.10"/>
    </reaction>
</comment>
<comment type="similarity">
    <text evidence="1">Belongs to the acetaldehyde dehydrogenase family.</text>
</comment>
<organism>
    <name type="scientific">Nocardioides sp. (strain ATCC BAA-499 / JS614)</name>
    <dbReference type="NCBI Taxonomy" id="196162"/>
    <lineage>
        <taxon>Bacteria</taxon>
        <taxon>Bacillati</taxon>
        <taxon>Actinomycetota</taxon>
        <taxon>Actinomycetes</taxon>
        <taxon>Propionibacteriales</taxon>
        <taxon>Nocardioidaceae</taxon>
        <taxon>Nocardioides</taxon>
    </lineage>
</organism>